<organism>
    <name type="scientific">Crotalus adamanteus</name>
    <name type="common">Eastern diamondback rattlesnake</name>
    <dbReference type="NCBI Taxonomy" id="8729"/>
    <lineage>
        <taxon>Eukaryota</taxon>
        <taxon>Metazoa</taxon>
        <taxon>Chordata</taxon>
        <taxon>Craniata</taxon>
        <taxon>Vertebrata</taxon>
        <taxon>Euteleostomi</taxon>
        <taxon>Lepidosauria</taxon>
        <taxon>Squamata</taxon>
        <taxon>Bifurcata</taxon>
        <taxon>Unidentata</taxon>
        <taxon>Episquamata</taxon>
        <taxon>Toxicofera</taxon>
        <taxon>Serpentes</taxon>
        <taxon>Colubroidea</taxon>
        <taxon>Viperidae</taxon>
        <taxon>Crotalinae</taxon>
        <taxon>Crotalus</taxon>
    </lineage>
</organism>
<accession>P68517</accession>
<accession>P00023</accession>
<proteinExistence type="evidence at protein level"/>
<reference key="1">
    <citation type="journal article" date="1965" name="J. Biol. Chem.">
        <title>Amino acid sequence of rattlesnake heart cytochrome c.</title>
        <authorList>
            <person name="Bahl O.P."/>
            <person name="Smith E.L."/>
        </authorList>
    </citation>
    <scope>PROTEIN SEQUENCE OF 2-105</scope>
    <scope>ACETYLATION AT GLY-2</scope>
</reference>
<keyword id="KW-0007">Acetylation</keyword>
<keyword id="KW-0903">Direct protein sequencing</keyword>
<keyword id="KW-0249">Electron transport</keyword>
<keyword id="KW-0349">Heme</keyword>
<keyword id="KW-0408">Iron</keyword>
<keyword id="KW-0479">Metal-binding</keyword>
<keyword id="KW-0496">Mitochondrion</keyword>
<keyword id="KW-0679">Respiratory chain</keyword>
<keyword id="KW-0813">Transport</keyword>
<feature type="initiator methionine" description="Removed" evidence="1">
    <location>
        <position position="1"/>
    </location>
</feature>
<feature type="chain" id="PRO_0000108245" description="Cytochrome c">
    <location>
        <begin position="2"/>
        <end position="105"/>
    </location>
</feature>
<feature type="binding site" description="covalent">
    <location>
        <position position="15"/>
    </location>
    <ligand>
        <name>heme c</name>
        <dbReference type="ChEBI" id="CHEBI:61717"/>
    </ligand>
</feature>
<feature type="binding site" description="covalent">
    <location>
        <position position="18"/>
    </location>
    <ligand>
        <name>heme c</name>
        <dbReference type="ChEBI" id="CHEBI:61717"/>
    </ligand>
</feature>
<feature type="binding site" description="axial binding residue">
    <location>
        <position position="19"/>
    </location>
    <ligand>
        <name>heme c</name>
        <dbReference type="ChEBI" id="CHEBI:61717"/>
    </ligand>
    <ligandPart>
        <name>Fe</name>
        <dbReference type="ChEBI" id="CHEBI:18248"/>
    </ligandPart>
</feature>
<feature type="binding site" description="axial binding residue">
    <location>
        <position position="81"/>
    </location>
    <ligand>
        <name>heme c</name>
        <dbReference type="ChEBI" id="CHEBI:61717"/>
    </ligand>
    <ligandPart>
        <name>Fe</name>
        <dbReference type="ChEBI" id="CHEBI:18248"/>
    </ligandPart>
</feature>
<feature type="modified residue" description="N-acetylglycine" evidence="1">
    <location>
        <position position="2"/>
    </location>
</feature>
<sequence>MGDVEKGKKIFSMKCGTCHTVEEGGKHKTGPNLHGLFGRKTGQAVGYSYTAANKNKGIIWGDDTLMEYLENPKKYIPGTKMVFTGLKSKKERTDLIAYLKEATAK</sequence>
<evidence type="ECO:0000269" key="1">
    <source>
    </source>
</evidence>
<evidence type="ECO:0000305" key="2"/>
<comment type="function">
    <text>Electron carrier protein. The oxidized form of the cytochrome c heme group can accept an electron from the heme group of the cytochrome c1 subunit of cytochrome reductase. Cytochrome c then transfers this electron to the cytochrome oxidase complex, the final protein carrier in the mitochondrial electron-transport chain.</text>
</comment>
<comment type="subcellular location">
    <subcellularLocation>
        <location>Mitochondrion intermembrane space</location>
    </subcellularLocation>
    <text>Loosely associated with the inner membrane.</text>
</comment>
<comment type="PTM">
    <text>Binds 1 heme c group covalently per subunit.</text>
</comment>
<comment type="similarity">
    <text evidence="2">Belongs to the cytochrome c family.</text>
</comment>
<comment type="online information" name="Protein Spotlight">
    <link uri="https://www.proteinspotlight.org/back_issues/076"/>
    <text>Life shuttle - Issue 76 of November 2006</text>
</comment>
<name>CYC_CROAD</name>
<dbReference type="PIR" id="A94624">
    <property type="entry name" value="CCRS"/>
</dbReference>
<dbReference type="SMR" id="P68517"/>
<dbReference type="iPTMnet" id="P68517"/>
<dbReference type="GO" id="GO:0005758">
    <property type="term" value="C:mitochondrial intermembrane space"/>
    <property type="evidence" value="ECO:0007669"/>
    <property type="project" value="UniProtKB-SubCell"/>
</dbReference>
<dbReference type="GO" id="GO:0009055">
    <property type="term" value="F:electron transfer activity"/>
    <property type="evidence" value="ECO:0007669"/>
    <property type="project" value="InterPro"/>
</dbReference>
<dbReference type="GO" id="GO:0020037">
    <property type="term" value="F:heme binding"/>
    <property type="evidence" value="ECO:0007669"/>
    <property type="project" value="InterPro"/>
</dbReference>
<dbReference type="GO" id="GO:0046872">
    <property type="term" value="F:metal ion binding"/>
    <property type="evidence" value="ECO:0007669"/>
    <property type="project" value="UniProtKB-KW"/>
</dbReference>
<dbReference type="FunFam" id="1.10.760.10:FF:000001">
    <property type="entry name" value="Cytochrome c iso-1"/>
    <property type="match status" value="1"/>
</dbReference>
<dbReference type="Gene3D" id="1.10.760.10">
    <property type="entry name" value="Cytochrome c-like domain"/>
    <property type="match status" value="1"/>
</dbReference>
<dbReference type="InterPro" id="IPR009056">
    <property type="entry name" value="Cyt_c-like_dom"/>
</dbReference>
<dbReference type="InterPro" id="IPR036909">
    <property type="entry name" value="Cyt_c-like_dom_sf"/>
</dbReference>
<dbReference type="InterPro" id="IPR002327">
    <property type="entry name" value="Cyt_c_1A/1B"/>
</dbReference>
<dbReference type="PANTHER" id="PTHR11961">
    <property type="entry name" value="CYTOCHROME C"/>
    <property type="match status" value="1"/>
</dbReference>
<dbReference type="Pfam" id="PF00034">
    <property type="entry name" value="Cytochrom_C"/>
    <property type="match status" value="1"/>
</dbReference>
<dbReference type="PRINTS" id="PR00604">
    <property type="entry name" value="CYTCHRMECIAB"/>
</dbReference>
<dbReference type="SUPFAM" id="SSF46626">
    <property type="entry name" value="Cytochrome c"/>
    <property type="match status" value="1"/>
</dbReference>
<dbReference type="PROSITE" id="PS51007">
    <property type="entry name" value="CYTC"/>
    <property type="match status" value="1"/>
</dbReference>
<protein>
    <recommendedName>
        <fullName>Cytochrome c</fullName>
    </recommendedName>
</protein>